<organism>
    <name type="scientific">Francisella tularensis subsp. holarctica (strain OSU18)</name>
    <dbReference type="NCBI Taxonomy" id="393011"/>
    <lineage>
        <taxon>Bacteria</taxon>
        <taxon>Pseudomonadati</taxon>
        <taxon>Pseudomonadota</taxon>
        <taxon>Gammaproteobacteria</taxon>
        <taxon>Thiotrichales</taxon>
        <taxon>Francisellaceae</taxon>
        <taxon>Francisella</taxon>
    </lineage>
</organism>
<sequence>MRTHYSSDINEKLQGQKVTVCGWVHRRRDHGGVIFLDIRDRTGLVQLVFNPDNDNFKVADSLRSEFVIKAEGVVNLRPEGQENKNISSGKVEIIGDSIEVINKSKTIPFQLDDFQSTGEDVKLKYRYIDLRRPEMQHKLITRSKAIRYVRNFLDNNGFLDIETPFLTKATPEGARDYLVPSRNFNGKFYALPQSPQLFKQLLMVSGFDRYYQIVKCFRDEDLRADRQPEFTQIDIEASFIDEAFIMSTMERMIAGLFKETIGVEFATPFQVMTFADAIDKYGSDKPDLRIPLEFVNIKEDMQNEEFKVFSGPANDPQSRVIALRISGGNDKLTRKMIDEYTKFVGIYGAKGLAYIKINSLSQGKEGLQSPIVKNISEETLFKVIEKTSAKEDDLLFFGAGKTKIVNDSMGALRAKIGEDLDLFNKDWAPLWVVDFPMFEKDDNRLYAMHHPFTAPKVSSVEDLVNTNPEELSSRAYDMVINGYEVGGGSIRIHKQDIQAKVFNLLGISDDEAREKFGFMLDALSYGTPIHGGIAFGVDRLIMLLTGTTNIRDVIAFPKTQTASCLMTEAPSTVSLEQLNELGIAVKKEER</sequence>
<protein>
    <recommendedName>
        <fullName evidence="1">Aspartate--tRNA(Asp/Asn) ligase</fullName>
        <ecNumber evidence="1">6.1.1.23</ecNumber>
    </recommendedName>
    <alternativeName>
        <fullName evidence="1">Aspartyl-tRNA synthetase</fullName>
        <shortName evidence="1">AspRS</shortName>
    </alternativeName>
    <alternativeName>
        <fullName evidence="1">Non-discriminating aspartyl-tRNA synthetase</fullName>
        <shortName evidence="1">ND-AspRS</shortName>
    </alternativeName>
</protein>
<reference key="1">
    <citation type="journal article" date="2006" name="J. Bacteriol.">
        <title>Chromosome rearrangement and diversification of Francisella tularensis revealed by the type B (OSU18) genome sequence.</title>
        <authorList>
            <person name="Petrosino J.F."/>
            <person name="Xiang Q."/>
            <person name="Karpathy S.E."/>
            <person name="Jiang H."/>
            <person name="Yerrapragada S."/>
            <person name="Liu Y."/>
            <person name="Gioia J."/>
            <person name="Hemphill L."/>
            <person name="Gonzalez A."/>
            <person name="Raghavan T.M."/>
            <person name="Uzman A."/>
            <person name="Fox G.E."/>
            <person name="Highlander S."/>
            <person name="Reichard M."/>
            <person name="Morton R.J."/>
            <person name="Clinkenbeard K.D."/>
            <person name="Weinstock G.M."/>
        </authorList>
    </citation>
    <scope>NUCLEOTIDE SEQUENCE [LARGE SCALE GENOMIC DNA]</scope>
    <source>
        <strain>OSU18</strain>
    </source>
</reference>
<keyword id="KW-0030">Aminoacyl-tRNA synthetase</keyword>
<keyword id="KW-0067">ATP-binding</keyword>
<keyword id="KW-0963">Cytoplasm</keyword>
<keyword id="KW-0436">Ligase</keyword>
<keyword id="KW-0547">Nucleotide-binding</keyword>
<keyword id="KW-0648">Protein biosynthesis</keyword>
<accession>Q0BPA2</accession>
<gene>
    <name evidence="1" type="primary">aspS</name>
    <name type="ordered locus">FTH_0020</name>
</gene>
<dbReference type="EC" id="6.1.1.23" evidence="1"/>
<dbReference type="EMBL" id="CP000437">
    <property type="protein sequence ID" value="ABI82082.1"/>
    <property type="molecule type" value="Genomic_DNA"/>
</dbReference>
<dbReference type="RefSeq" id="WP_010032850.1">
    <property type="nucleotide sequence ID" value="NC_017463.1"/>
</dbReference>
<dbReference type="SMR" id="Q0BPA2"/>
<dbReference type="KEGG" id="fth:FTH_0020"/>
<dbReference type="GO" id="GO:0005737">
    <property type="term" value="C:cytoplasm"/>
    <property type="evidence" value="ECO:0007669"/>
    <property type="project" value="UniProtKB-SubCell"/>
</dbReference>
<dbReference type="GO" id="GO:0004815">
    <property type="term" value="F:aspartate-tRNA ligase activity"/>
    <property type="evidence" value="ECO:0007669"/>
    <property type="project" value="UniProtKB-UniRule"/>
</dbReference>
<dbReference type="GO" id="GO:0050560">
    <property type="term" value="F:aspartate-tRNA(Asn) ligase activity"/>
    <property type="evidence" value="ECO:0007669"/>
    <property type="project" value="UniProtKB-EC"/>
</dbReference>
<dbReference type="GO" id="GO:0005524">
    <property type="term" value="F:ATP binding"/>
    <property type="evidence" value="ECO:0007669"/>
    <property type="project" value="UniProtKB-UniRule"/>
</dbReference>
<dbReference type="GO" id="GO:0003676">
    <property type="term" value="F:nucleic acid binding"/>
    <property type="evidence" value="ECO:0007669"/>
    <property type="project" value="InterPro"/>
</dbReference>
<dbReference type="GO" id="GO:0006422">
    <property type="term" value="P:aspartyl-tRNA aminoacylation"/>
    <property type="evidence" value="ECO:0007669"/>
    <property type="project" value="UniProtKB-UniRule"/>
</dbReference>
<dbReference type="CDD" id="cd00777">
    <property type="entry name" value="AspRS_core"/>
    <property type="match status" value="1"/>
</dbReference>
<dbReference type="CDD" id="cd04317">
    <property type="entry name" value="EcAspRS_like_N"/>
    <property type="match status" value="1"/>
</dbReference>
<dbReference type="Gene3D" id="3.30.930.10">
    <property type="entry name" value="Bira Bifunctional Protein, Domain 2"/>
    <property type="match status" value="1"/>
</dbReference>
<dbReference type="Gene3D" id="3.30.1360.30">
    <property type="entry name" value="GAD-like domain"/>
    <property type="match status" value="1"/>
</dbReference>
<dbReference type="Gene3D" id="2.40.50.140">
    <property type="entry name" value="Nucleic acid-binding proteins"/>
    <property type="match status" value="1"/>
</dbReference>
<dbReference type="HAMAP" id="MF_00044">
    <property type="entry name" value="Asp_tRNA_synth_type1"/>
    <property type="match status" value="1"/>
</dbReference>
<dbReference type="InterPro" id="IPR004364">
    <property type="entry name" value="Aa-tRNA-synt_II"/>
</dbReference>
<dbReference type="InterPro" id="IPR006195">
    <property type="entry name" value="aa-tRNA-synth_II"/>
</dbReference>
<dbReference type="InterPro" id="IPR045864">
    <property type="entry name" value="aa-tRNA-synth_II/BPL/LPL"/>
</dbReference>
<dbReference type="InterPro" id="IPR004524">
    <property type="entry name" value="Asp-tRNA-ligase_1"/>
</dbReference>
<dbReference type="InterPro" id="IPR047089">
    <property type="entry name" value="Asp-tRNA-ligase_1_N"/>
</dbReference>
<dbReference type="InterPro" id="IPR002312">
    <property type="entry name" value="Asp/Asn-tRNA-synth_IIb"/>
</dbReference>
<dbReference type="InterPro" id="IPR047090">
    <property type="entry name" value="AspRS_core"/>
</dbReference>
<dbReference type="InterPro" id="IPR004115">
    <property type="entry name" value="GAD-like_sf"/>
</dbReference>
<dbReference type="InterPro" id="IPR029351">
    <property type="entry name" value="GAD_dom"/>
</dbReference>
<dbReference type="InterPro" id="IPR012340">
    <property type="entry name" value="NA-bd_OB-fold"/>
</dbReference>
<dbReference type="InterPro" id="IPR004365">
    <property type="entry name" value="NA-bd_OB_tRNA"/>
</dbReference>
<dbReference type="NCBIfam" id="TIGR00459">
    <property type="entry name" value="aspS_bact"/>
    <property type="match status" value="1"/>
</dbReference>
<dbReference type="NCBIfam" id="NF001750">
    <property type="entry name" value="PRK00476.1"/>
    <property type="match status" value="1"/>
</dbReference>
<dbReference type="PANTHER" id="PTHR22594:SF5">
    <property type="entry name" value="ASPARTATE--TRNA LIGASE, MITOCHONDRIAL"/>
    <property type="match status" value="1"/>
</dbReference>
<dbReference type="PANTHER" id="PTHR22594">
    <property type="entry name" value="ASPARTYL/LYSYL-TRNA SYNTHETASE"/>
    <property type="match status" value="1"/>
</dbReference>
<dbReference type="Pfam" id="PF02938">
    <property type="entry name" value="GAD"/>
    <property type="match status" value="1"/>
</dbReference>
<dbReference type="Pfam" id="PF00152">
    <property type="entry name" value="tRNA-synt_2"/>
    <property type="match status" value="1"/>
</dbReference>
<dbReference type="Pfam" id="PF01336">
    <property type="entry name" value="tRNA_anti-codon"/>
    <property type="match status" value="1"/>
</dbReference>
<dbReference type="PRINTS" id="PR01042">
    <property type="entry name" value="TRNASYNTHASP"/>
</dbReference>
<dbReference type="SUPFAM" id="SSF55681">
    <property type="entry name" value="Class II aaRS and biotin synthetases"/>
    <property type="match status" value="1"/>
</dbReference>
<dbReference type="SUPFAM" id="SSF55261">
    <property type="entry name" value="GAD domain-like"/>
    <property type="match status" value="1"/>
</dbReference>
<dbReference type="SUPFAM" id="SSF50249">
    <property type="entry name" value="Nucleic acid-binding proteins"/>
    <property type="match status" value="1"/>
</dbReference>
<dbReference type="PROSITE" id="PS50862">
    <property type="entry name" value="AA_TRNA_LIGASE_II"/>
    <property type="match status" value="1"/>
</dbReference>
<comment type="function">
    <text evidence="1">Aspartyl-tRNA synthetase with relaxed tRNA specificity since it is able to aspartylate not only its cognate tRNA(Asp) but also tRNA(Asn). Reaction proceeds in two steps: L-aspartate is first activated by ATP to form Asp-AMP and then transferred to the acceptor end of tRNA(Asp/Asn).</text>
</comment>
<comment type="catalytic activity">
    <reaction evidence="1">
        <text>tRNA(Asx) + L-aspartate + ATP = L-aspartyl-tRNA(Asx) + AMP + diphosphate</text>
        <dbReference type="Rhea" id="RHEA:18349"/>
        <dbReference type="Rhea" id="RHEA-COMP:9710"/>
        <dbReference type="Rhea" id="RHEA-COMP:9711"/>
        <dbReference type="ChEBI" id="CHEBI:29991"/>
        <dbReference type="ChEBI" id="CHEBI:30616"/>
        <dbReference type="ChEBI" id="CHEBI:33019"/>
        <dbReference type="ChEBI" id="CHEBI:78442"/>
        <dbReference type="ChEBI" id="CHEBI:78516"/>
        <dbReference type="ChEBI" id="CHEBI:456215"/>
        <dbReference type="EC" id="6.1.1.23"/>
    </reaction>
</comment>
<comment type="subunit">
    <text evidence="1">Homodimer.</text>
</comment>
<comment type="subcellular location">
    <subcellularLocation>
        <location evidence="1">Cytoplasm</location>
    </subcellularLocation>
</comment>
<comment type="similarity">
    <text evidence="1">Belongs to the class-II aminoacyl-tRNA synthetase family. Type 1 subfamily.</text>
</comment>
<name>SYDND_FRATO</name>
<evidence type="ECO:0000255" key="1">
    <source>
        <dbReference type="HAMAP-Rule" id="MF_00044"/>
    </source>
</evidence>
<proteinExistence type="inferred from homology"/>
<feature type="chain" id="PRO_1000006679" description="Aspartate--tRNA(Asp/Asn) ligase">
    <location>
        <begin position="1"/>
        <end position="590"/>
    </location>
</feature>
<feature type="region of interest" description="Aspartate" evidence="1">
    <location>
        <begin position="196"/>
        <end position="199"/>
    </location>
</feature>
<feature type="binding site" evidence="1">
    <location>
        <position position="172"/>
    </location>
    <ligand>
        <name>L-aspartate</name>
        <dbReference type="ChEBI" id="CHEBI:29991"/>
    </ligand>
</feature>
<feature type="binding site" evidence="1">
    <location>
        <begin position="218"/>
        <end position="220"/>
    </location>
    <ligand>
        <name>ATP</name>
        <dbReference type="ChEBI" id="CHEBI:30616"/>
    </ligand>
</feature>
<feature type="binding site" evidence="1">
    <location>
        <position position="218"/>
    </location>
    <ligand>
        <name>L-aspartate</name>
        <dbReference type="ChEBI" id="CHEBI:29991"/>
    </ligand>
</feature>
<feature type="binding site" evidence="1">
    <location>
        <position position="227"/>
    </location>
    <ligand>
        <name>ATP</name>
        <dbReference type="ChEBI" id="CHEBI:30616"/>
    </ligand>
</feature>
<feature type="binding site" evidence="1">
    <location>
        <position position="449"/>
    </location>
    <ligand>
        <name>L-aspartate</name>
        <dbReference type="ChEBI" id="CHEBI:29991"/>
    </ligand>
</feature>
<feature type="binding site" evidence="1">
    <location>
        <position position="484"/>
    </location>
    <ligand>
        <name>ATP</name>
        <dbReference type="ChEBI" id="CHEBI:30616"/>
    </ligand>
</feature>
<feature type="binding site" evidence="1">
    <location>
        <position position="491"/>
    </location>
    <ligand>
        <name>L-aspartate</name>
        <dbReference type="ChEBI" id="CHEBI:29991"/>
    </ligand>
</feature>
<feature type="binding site" evidence="1">
    <location>
        <begin position="536"/>
        <end position="539"/>
    </location>
    <ligand>
        <name>ATP</name>
        <dbReference type="ChEBI" id="CHEBI:30616"/>
    </ligand>
</feature>
<feature type="site" description="Important for tRNA non-discrimination" evidence="1">
    <location>
        <position position="30"/>
    </location>
</feature>
<feature type="site" description="Important for tRNA non-discrimination" evidence="1">
    <location>
        <position position="80"/>
    </location>
</feature>